<sequence length="365" mass="40951">MFEVNPVINQIKEIRERTELLRGYLDYALKQERLEEVNAELEDSAVWNEPERAQALGREKSALEAVVETIDTLVTGTDDVEGLLELAVEAEDQETFDEAQSELADLNEQLEALEFRRMFSGPHDSNDAYLDLQSGSGGTEAQDWCNILLRMYLRWGEAKGFKVELVEATGGDVAGIKGATVRFVGEYAYGWLRTETGVHRLVRKSPFDSSGRRHTSFASAFVYPEVDDNIEIDMNPSDLRIDVYRASGAGGQHVNTTESAVRITHVPTNTVVQCQNERSQHKNKAQAMKQLKAKLFELELQQQNAEKQTQEDSKSDIGWGSQIRSYVLDDARIKDLRTGVESRNTQSVLDGNLDKFIEASLKSGL</sequence>
<protein>
    <recommendedName>
        <fullName evidence="1">Peptide chain release factor 2</fullName>
        <shortName evidence="1">RF-2</shortName>
    </recommendedName>
</protein>
<comment type="function">
    <text evidence="1">Peptide chain release factor 2 directs the termination of translation in response to the peptide chain termination codons UGA and UAA.</text>
</comment>
<comment type="subcellular location">
    <subcellularLocation>
        <location evidence="1">Cytoplasm</location>
    </subcellularLocation>
</comment>
<comment type="PTM">
    <text evidence="1">Methylated by PrmC. Methylation increases the termination efficiency of RF2.</text>
</comment>
<comment type="similarity">
    <text evidence="1">Belongs to the prokaryotic/mitochondrial release factor family.</text>
</comment>
<accession>Q3ILD8</accession>
<name>RF2_PSET1</name>
<dbReference type="EMBL" id="CR954246">
    <property type="protein sequence ID" value="CAI85607.1"/>
    <property type="molecule type" value="Genomic_DNA"/>
</dbReference>
<dbReference type="SMR" id="Q3ILD8"/>
<dbReference type="STRING" id="326442.PSHAa0517"/>
<dbReference type="KEGG" id="pha:PSHAa0517"/>
<dbReference type="eggNOG" id="COG1186">
    <property type="taxonomic scope" value="Bacteria"/>
</dbReference>
<dbReference type="HOGENOM" id="CLU_220733_2_1_6"/>
<dbReference type="Proteomes" id="UP000006843">
    <property type="component" value="Chromosome I"/>
</dbReference>
<dbReference type="GO" id="GO:0005737">
    <property type="term" value="C:cytoplasm"/>
    <property type="evidence" value="ECO:0007669"/>
    <property type="project" value="UniProtKB-SubCell"/>
</dbReference>
<dbReference type="GO" id="GO:0016149">
    <property type="term" value="F:translation release factor activity, codon specific"/>
    <property type="evidence" value="ECO:0007669"/>
    <property type="project" value="UniProtKB-UniRule"/>
</dbReference>
<dbReference type="FunFam" id="3.30.160.20:FF:000010">
    <property type="entry name" value="Peptide chain release factor 2"/>
    <property type="match status" value="1"/>
</dbReference>
<dbReference type="Gene3D" id="3.30.160.20">
    <property type="match status" value="1"/>
</dbReference>
<dbReference type="Gene3D" id="3.30.70.1660">
    <property type="match status" value="1"/>
</dbReference>
<dbReference type="Gene3D" id="1.20.58.410">
    <property type="entry name" value="Release factor"/>
    <property type="match status" value="1"/>
</dbReference>
<dbReference type="HAMAP" id="MF_00094">
    <property type="entry name" value="Rel_fac_2"/>
    <property type="match status" value="1"/>
</dbReference>
<dbReference type="InterPro" id="IPR005139">
    <property type="entry name" value="PCRF"/>
</dbReference>
<dbReference type="InterPro" id="IPR000352">
    <property type="entry name" value="Pep_chain_release_fac_I"/>
</dbReference>
<dbReference type="InterPro" id="IPR045853">
    <property type="entry name" value="Pep_chain_release_fac_I_sf"/>
</dbReference>
<dbReference type="InterPro" id="IPR004374">
    <property type="entry name" value="PrfB"/>
</dbReference>
<dbReference type="NCBIfam" id="TIGR00020">
    <property type="entry name" value="prfB"/>
    <property type="match status" value="1"/>
</dbReference>
<dbReference type="PANTHER" id="PTHR43116:SF3">
    <property type="entry name" value="CLASS I PEPTIDE CHAIN RELEASE FACTOR"/>
    <property type="match status" value="1"/>
</dbReference>
<dbReference type="PANTHER" id="PTHR43116">
    <property type="entry name" value="PEPTIDE CHAIN RELEASE FACTOR 2"/>
    <property type="match status" value="1"/>
</dbReference>
<dbReference type="Pfam" id="PF03462">
    <property type="entry name" value="PCRF"/>
    <property type="match status" value="1"/>
</dbReference>
<dbReference type="Pfam" id="PF00472">
    <property type="entry name" value="RF-1"/>
    <property type="match status" value="1"/>
</dbReference>
<dbReference type="SMART" id="SM00937">
    <property type="entry name" value="PCRF"/>
    <property type="match status" value="1"/>
</dbReference>
<dbReference type="SUPFAM" id="SSF75620">
    <property type="entry name" value="Release factor"/>
    <property type="match status" value="1"/>
</dbReference>
<dbReference type="PROSITE" id="PS00745">
    <property type="entry name" value="RF_PROK_I"/>
    <property type="match status" value="1"/>
</dbReference>
<feature type="chain" id="PRO_1000005009" description="Peptide chain release factor 2">
    <location>
        <begin position="1"/>
        <end position="365"/>
    </location>
</feature>
<feature type="modified residue" description="N5-methylglutamine" evidence="1">
    <location>
        <position position="252"/>
    </location>
</feature>
<reference key="1">
    <citation type="journal article" date="2005" name="Genome Res.">
        <title>Coping with cold: the genome of the versatile marine Antarctica bacterium Pseudoalteromonas haloplanktis TAC125.</title>
        <authorList>
            <person name="Medigue C."/>
            <person name="Krin E."/>
            <person name="Pascal G."/>
            <person name="Barbe V."/>
            <person name="Bernsel A."/>
            <person name="Bertin P.N."/>
            <person name="Cheung F."/>
            <person name="Cruveiller S."/>
            <person name="D'Amico S."/>
            <person name="Duilio A."/>
            <person name="Fang G."/>
            <person name="Feller G."/>
            <person name="Ho C."/>
            <person name="Mangenot S."/>
            <person name="Marino G."/>
            <person name="Nilsson J."/>
            <person name="Parrilli E."/>
            <person name="Rocha E.P.C."/>
            <person name="Rouy Z."/>
            <person name="Sekowska A."/>
            <person name="Tutino M.L."/>
            <person name="Vallenet D."/>
            <person name="von Heijne G."/>
            <person name="Danchin A."/>
        </authorList>
    </citation>
    <scope>NUCLEOTIDE SEQUENCE [LARGE SCALE GENOMIC DNA]</scope>
    <source>
        <strain>TAC 125</strain>
    </source>
</reference>
<gene>
    <name evidence="1" type="primary">prfB</name>
    <name type="ordered locus">PSHAa0517</name>
</gene>
<keyword id="KW-0963">Cytoplasm</keyword>
<keyword id="KW-0488">Methylation</keyword>
<keyword id="KW-0648">Protein biosynthesis</keyword>
<keyword id="KW-1185">Reference proteome</keyword>
<organism>
    <name type="scientific">Pseudoalteromonas translucida (strain TAC 125)</name>
    <dbReference type="NCBI Taxonomy" id="326442"/>
    <lineage>
        <taxon>Bacteria</taxon>
        <taxon>Pseudomonadati</taxon>
        <taxon>Pseudomonadota</taxon>
        <taxon>Gammaproteobacteria</taxon>
        <taxon>Alteromonadales</taxon>
        <taxon>Pseudoalteromonadaceae</taxon>
        <taxon>Pseudoalteromonas</taxon>
    </lineage>
</organism>
<evidence type="ECO:0000255" key="1">
    <source>
        <dbReference type="HAMAP-Rule" id="MF_00094"/>
    </source>
</evidence>
<proteinExistence type="inferred from homology"/>